<organism>
    <name type="scientific">Elsinoe fawcettii</name>
    <name type="common">Citrus scab fungus</name>
    <name type="synonym">Sphaceloma fawcettii</name>
    <dbReference type="NCBI Taxonomy" id="40997"/>
    <lineage>
        <taxon>Eukaryota</taxon>
        <taxon>Fungi</taxon>
        <taxon>Dikarya</taxon>
        <taxon>Ascomycota</taxon>
        <taxon>Pezizomycotina</taxon>
        <taxon>Dothideomycetes</taxon>
        <taxon>Dothideomycetidae</taxon>
        <taxon>Myriangiales</taxon>
        <taxon>Elsinoaceae</taxon>
        <taxon>Elsinoe</taxon>
    </lineage>
</organism>
<name>HP2_ELSFA</name>
<protein>
    <recommendedName>
        <fullName evidence="4">Elsinochromes biosynthesis cluster protein HP2</fullName>
    </recommendedName>
</protein>
<comment type="function">
    <text evidence="3 5">Part of the gene cluster that mediates the biosynthesis of elsinochromes, pigments consisting of at least four interconvertible tautomers (A, B, C and D) that have a core phenolic quinone to which various side chains are attached and which play an important role in fungal pathogenesis (PubMed:18957608). The non-reducing polyketide synthase PKS1 was proposed to iteratively catalyze decarboxylation between acetyl-CoA and malonyl-CoA subunits for polyketide chain elongation. The released polyketide undergoes cyclization to form an aromatic ring, and proceeds via serial modification steps to produce the heptaketide back- bone of elsinochrome. As elsinochrome has a symmetrical structure, two identical heptaketides are fused to form a core 1,2-dihydrobenzo-perylene ring structure, which can then be successively modified to produce the various derivatives of elsinochrome. Some of these reactions may be cooperatively carried out, at least in part, by the products of RDT1, OXR1 and PKS1. PRF1, embedded within the elsinochrome cluster possibly functions to stabilize some of the biosynthetic enzymes required for elsinochrome production. As prefoldin is a hexamer containing 2 a and 4 b subunits, additional prefoldin subunits, whose coding genes may not immediately link to the elsinochrome biosynthetic gene cluster, are required to fulfill the chaperone function. In addition, no methyltransferase-coding gene exists within the biosynthetic gene cluster, even though elsinochrome has four methyl groups at positions C3, C7, C8 and C12. Apparently, the identified gene cluster does not contain the entire entourage of genes responsible for elsinochrome biosynthesis. Once elsinochrome is synthesized, it must be exported outside the fungal cells, which is probably accomplished by the ECT1 transporter, to avoid toxicity (PubMed:21199563).</text>
</comment>
<comment type="subcellular location">
    <subcellularLocation>
        <location evidence="1">Membrane</location>
        <topology evidence="1">Multi-pass membrane protein</topology>
    </subcellularLocation>
</comment>
<comment type="induction">
    <text evidence="3">Expression is up-regulated during nitrogen starvation or at alkaline pH, conditions highly conducive to elsinochrome accumulation.</text>
</comment>
<gene>
    <name evidence="4" type="primary">HP2</name>
</gene>
<dbReference type="EMBL" id="EU414200">
    <property type="protein sequence ID" value="ABZ82010.1"/>
    <property type="molecule type" value="Genomic_DNA"/>
</dbReference>
<dbReference type="GlyCosmos" id="B1A0U6">
    <property type="glycosylation" value="2 sites, No reported glycans"/>
</dbReference>
<dbReference type="GO" id="GO:0016020">
    <property type="term" value="C:membrane"/>
    <property type="evidence" value="ECO:0007669"/>
    <property type="project" value="UniProtKB-SubCell"/>
</dbReference>
<sequence>MVLLYILIMVALIPMYMTVVQDATFSHPPPGLLIPEAWSGSGSIRLWTDAQEIPVRCFWKLVYDPRIHPETAAIQQGDSIMYMYSGTRFLDYRTVLSALLLTFVFFWRMLSMFDRSRNRFQRACVSIPSALLEVCRQKAIKKTATLPFYGQALYFGIMCLYTAHIVLWDFLNSFAGTLWLITLNLANGTAQIINLRKERHRNRHDEESSWTFGQIVPIVLLVSPLVAAFEDLLSKRSRRALREGSVGNTSLNEVDLTPEPSLTEATTLSLHTRPLIYSVPTSITQSSIASQKSSGTPAQDLIRSSWPYAILFWELHVLLAFMVIWLPLAQSQLFIFRYAYWEAYYAFPAAVGTFWLTVVIAVPFSSIGRSSYPCPKPRRSGLNVA</sequence>
<evidence type="ECO:0000255" key="1"/>
<evidence type="ECO:0000255" key="2">
    <source>
        <dbReference type="PROSITE-ProRule" id="PRU00498"/>
    </source>
</evidence>
<evidence type="ECO:0000269" key="3">
    <source>
    </source>
</evidence>
<evidence type="ECO:0000303" key="4">
    <source>
    </source>
</evidence>
<evidence type="ECO:0000303" key="5">
    <source>
    </source>
</evidence>
<feature type="signal peptide" evidence="1">
    <location>
        <begin position="1"/>
        <end position="22"/>
    </location>
</feature>
<feature type="chain" id="PRO_5002759954" description="Elsinochromes biosynthesis cluster protein HP2" evidence="1">
    <location>
        <begin position="23"/>
        <end position="385"/>
    </location>
</feature>
<feature type="transmembrane region" description="Helical" evidence="1">
    <location>
        <begin position="94"/>
        <end position="114"/>
    </location>
</feature>
<feature type="transmembrane region" description="Helical" evidence="1">
    <location>
        <begin position="148"/>
        <end position="168"/>
    </location>
</feature>
<feature type="transmembrane region" description="Helical" evidence="1">
    <location>
        <begin position="209"/>
        <end position="229"/>
    </location>
</feature>
<feature type="transmembrane region" description="Helical" evidence="1">
    <location>
        <begin position="309"/>
        <end position="329"/>
    </location>
</feature>
<feature type="transmembrane region" description="Helical" evidence="1">
    <location>
        <begin position="344"/>
        <end position="364"/>
    </location>
</feature>
<feature type="glycosylation site" description="N-linked (GlcNAc...) asparagine" evidence="2">
    <location>
        <position position="187"/>
    </location>
</feature>
<feature type="glycosylation site" description="N-linked (GlcNAc...) asparagine" evidence="2">
    <location>
        <position position="248"/>
    </location>
</feature>
<reference key="1">
    <citation type="journal article" date="2008" name="Microbiology">
        <title>Determination of a transcriptional regulator-like gene involved in biosynthesis of elsinochrome phytotoxin by the citrus scab fungus, Elsinoe fawcettii.</title>
        <authorList>
            <person name="Chung K.R."/>
            <person name="Liao H.L."/>
        </authorList>
    </citation>
    <scope>NUCLEOTIDE SEQUENCE [GENOMIC DNA]</scope>
    <scope>IDENTIFICATION</scope>
    <scope>FUNCTION</scope>
    <scope>INDUCTION</scope>
</reference>
<reference key="2">
    <citation type="journal article" date="2011" name="Mol. Plant Pathol.">
        <title>Elsinoe fawcettii and Elsinoe australis: the fungal pathogens causing citrus scab.</title>
        <authorList>
            <person name="Chung K.R."/>
        </authorList>
    </citation>
    <scope>REVIEW</scope>
</reference>
<proteinExistence type="evidence at transcript level"/>
<keyword id="KW-0325">Glycoprotein</keyword>
<keyword id="KW-0472">Membrane</keyword>
<keyword id="KW-0732">Signal</keyword>
<keyword id="KW-0812">Transmembrane</keyword>
<keyword id="KW-1133">Transmembrane helix</keyword>
<accession>B1A0U6</accession>